<accession>B7LEX6</accession>
<name>XNI_ECO55</name>
<reference key="1">
    <citation type="journal article" date="2009" name="PLoS Genet.">
        <title>Organised genome dynamics in the Escherichia coli species results in highly diverse adaptive paths.</title>
        <authorList>
            <person name="Touchon M."/>
            <person name="Hoede C."/>
            <person name="Tenaillon O."/>
            <person name="Barbe V."/>
            <person name="Baeriswyl S."/>
            <person name="Bidet P."/>
            <person name="Bingen E."/>
            <person name="Bonacorsi S."/>
            <person name="Bouchier C."/>
            <person name="Bouvet O."/>
            <person name="Calteau A."/>
            <person name="Chiapello H."/>
            <person name="Clermont O."/>
            <person name="Cruveiller S."/>
            <person name="Danchin A."/>
            <person name="Diard M."/>
            <person name="Dossat C."/>
            <person name="Karoui M.E."/>
            <person name="Frapy E."/>
            <person name="Garry L."/>
            <person name="Ghigo J.M."/>
            <person name="Gilles A.M."/>
            <person name="Johnson J."/>
            <person name="Le Bouguenec C."/>
            <person name="Lescat M."/>
            <person name="Mangenot S."/>
            <person name="Martinez-Jehanne V."/>
            <person name="Matic I."/>
            <person name="Nassif X."/>
            <person name="Oztas S."/>
            <person name="Petit M.A."/>
            <person name="Pichon C."/>
            <person name="Rouy Z."/>
            <person name="Ruf C.S."/>
            <person name="Schneider D."/>
            <person name="Tourret J."/>
            <person name="Vacherie B."/>
            <person name="Vallenet D."/>
            <person name="Medigue C."/>
            <person name="Rocha E.P.C."/>
            <person name="Denamur E."/>
        </authorList>
    </citation>
    <scope>NUCLEOTIDE SEQUENCE [LARGE SCALE GENOMIC DNA]</scope>
    <source>
        <strain>55989 / EAEC</strain>
    </source>
</reference>
<keyword id="KW-0238">DNA-binding</keyword>
<keyword id="KW-0255">Endonuclease</keyword>
<keyword id="KW-0378">Hydrolase</keyword>
<keyword id="KW-0460">Magnesium</keyword>
<keyword id="KW-0479">Metal-binding</keyword>
<keyword id="KW-0540">Nuclease</keyword>
<keyword id="KW-0630">Potassium</keyword>
<keyword id="KW-1185">Reference proteome</keyword>
<protein>
    <recommendedName>
        <fullName evidence="1">Flap endonuclease Xni</fullName>
        <shortName evidence="1">FEN</shortName>
        <ecNumber evidence="1">3.1.-.-</ecNumber>
    </recommendedName>
</protein>
<organism>
    <name type="scientific">Escherichia coli (strain 55989 / EAEC)</name>
    <dbReference type="NCBI Taxonomy" id="585055"/>
    <lineage>
        <taxon>Bacteria</taxon>
        <taxon>Pseudomonadati</taxon>
        <taxon>Pseudomonadota</taxon>
        <taxon>Gammaproteobacteria</taxon>
        <taxon>Enterobacterales</taxon>
        <taxon>Enterobacteriaceae</taxon>
        <taxon>Escherichia</taxon>
    </lineage>
</organism>
<dbReference type="EC" id="3.1.-.-" evidence="1"/>
<dbReference type="EMBL" id="CU928145">
    <property type="protein sequence ID" value="CAU98971.1"/>
    <property type="status" value="ALT_INIT"/>
    <property type="molecule type" value="Genomic_DNA"/>
</dbReference>
<dbReference type="RefSeq" id="WP_000268232.1">
    <property type="nucleotide sequence ID" value="NC_011748.1"/>
</dbReference>
<dbReference type="SMR" id="B7LEX6"/>
<dbReference type="GeneID" id="93779200"/>
<dbReference type="KEGG" id="eck:EC55989_3077"/>
<dbReference type="HOGENOM" id="CLU_004675_1_2_6"/>
<dbReference type="Proteomes" id="UP000000746">
    <property type="component" value="Chromosome"/>
</dbReference>
<dbReference type="GO" id="GO:0008409">
    <property type="term" value="F:5'-3' exonuclease activity"/>
    <property type="evidence" value="ECO:0007669"/>
    <property type="project" value="InterPro"/>
</dbReference>
<dbReference type="GO" id="GO:0017108">
    <property type="term" value="F:5'-flap endonuclease activity"/>
    <property type="evidence" value="ECO:0007669"/>
    <property type="project" value="UniProtKB-UniRule"/>
</dbReference>
<dbReference type="GO" id="GO:0003677">
    <property type="term" value="F:DNA binding"/>
    <property type="evidence" value="ECO:0007669"/>
    <property type="project" value="UniProtKB-UniRule"/>
</dbReference>
<dbReference type="GO" id="GO:0000287">
    <property type="term" value="F:magnesium ion binding"/>
    <property type="evidence" value="ECO:0007669"/>
    <property type="project" value="UniProtKB-UniRule"/>
</dbReference>
<dbReference type="GO" id="GO:0030955">
    <property type="term" value="F:potassium ion binding"/>
    <property type="evidence" value="ECO:0007669"/>
    <property type="project" value="UniProtKB-UniRule"/>
</dbReference>
<dbReference type="GO" id="GO:0033567">
    <property type="term" value="P:DNA replication, Okazaki fragment processing"/>
    <property type="evidence" value="ECO:0007669"/>
    <property type="project" value="UniProtKB-UniRule"/>
</dbReference>
<dbReference type="CDD" id="cd09898">
    <property type="entry name" value="H3TH_53EXO"/>
    <property type="match status" value="1"/>
</dbReference>
<dbReference type="CDD" id="cd09859">
    <property type="entry name" value="PIN_53EXO"/>
    <property type="match status" value="1"/>
</dbReference>
<dbReference type="FunFam" id="1.10.150.20:FF:000003">
    <property type="entry name" value="DNA polymerase I"/>
    <property type="match status" value="1"/>
</dbReference>
<dbReference type="FunFam" id="3.40.50.1010:FF:000011">
    <property type="entry name" value="Flap endonuclease Xni"/>
    <property type="match status" value="1"/>
</dbReference>
<dbReference type="Gene3D" id="1.10.150.20">
    <property type="entry name" value="5' to 3' exonuclease, C-terminal subdomain"/>
    <property type="match status" value="1"/>
</dbReference>
<dbReference type="Gene3D" id="3.40.50.1010">
    <property type="entry name" value="5'-nuclease"/>
    <property type="match status" value="1"/>
</dbReference>
<dbReference type="HAMAP" id="MF_01192">
    <property type="entry name" value="Xni"/>
    <property type="match status" value="1"/>
</dbReference>
<dbReference type="InterPro" id="IPR020046">
    <property type="entry name" value="5-3_exonucl_a-hlix_arch_N"/>
</dbReference>
<dbReference type="InterPro" id="IPR002421">
    <property type="entry name" value="5-3_exonuclease"/>
</dbReference>
<dbReference type="InterPro" id="IPR036279">
    <property type="entry name" value="5-3_exonuclease_C_sf"/>
</dbReference>
<dbReference type="InterPro" id="IPR020045">
    <property type="entry name" value="DNA_polI_H3TH"/>
</dbReference>
<dbReference type="InterPro" id="IPR038969">
    <property type="entry name" value="FEN"/>
</dbReference>
<dbReference type="InterPro" id="IPR008918">
    <property type="entry name" value="HhH2"/>
</dbReference>
<dbReference type="InterPro" id="IPR029060">
    <property type="entry name" value="PIN-like_dom_sf"/>
</dbReference>
<dbReference type="InterPro" id="IPR022895">
    <property type="entry name" value="Xni"/>
</dbReference>
<dbReference type="NCBIfam" id="NF007017">
    <property type="entry name" value="PRK09482.1"/>
    <property type="match status" value="1"/>
</dbReference>
<dbReference type="PANTHER" id="PTHR42646:SF2">
    <property type="entry name" value="5'-3' EXONUCLEASE FAMILY PROTEIN"/>
    <property type="match status" value="1"/>
</dbReference>
<dbReference type="PANTHER" id="PTHR42646">
    <property type="entry name" value="FLAP ENDONUCLEASE XNI"/>
    <property type="match status" value="1"/>
</dbReference>
<dbReference type="Pfam" id="PF01367">
    <property type="entry name" value="5_3_exonuc"/>
    <property type="match status" value="1"/>
</dbReference>
<dbReference type="Pfam" id="PF02739">
    <property type="entry name" value="5_3_exonuc_N"/>
    <property type="match status" value="1"/>
</dbReference>
<dbReference type="SMART" id="SM00475">
    <property type="entry name" value="53EXOc"/>
    <property type="match status" value="1"/>
</dbReference>
<dbReference type="SMART" id="SM00279">
    <property type="entry name" value="HhH2"/>
    <property type="match status" value="1"/>
</dbReference>
<dbReference type="SUPFAM" id="SSF47807">
    <property type="entry name" value="5' to 3' exonuclease, C-terminal subdomain"/>
    <property type="match status" value="1"/>
</dbReference>
<dbReference type="SUPFAM" id="SSF88723">
    <property type="entry name" value="PIN domain-like"/>
    <property type="match status" value="1"/>
</dbReference>
<feature type="chain" id="PRO_1000164501" description="Flap endonuclease Xni">
    <location>
        <begin position="1"/>
        <end position="251"/>
    </location>
</feature>
<feature type="domain" description="5'-3' exonuclease" evidence="1">
    <location>
        <begin position="160"/>
        <end position="249"/>
    </location>
</feature>
<feature type="region of interest" description="Interaction with DNA" evidence="1">
    <location>
        <begin position="184"/>
        <end position="189"/>
    </location>
</feature>
<feature type="binding site" evidence="1">
    <location>
        <position position="104"/>
    </location>
    <ligand>
        <name>Mg(2+)</name>
        <dbReference type="ChEBI" id="CHEBI:18420"/>
    </ligand>
</feature>
<feature type="binding site" evidence="1">
    <location>
        <position position="171"/>
    </location>
    <ligand>
        <name>K(+)</name>
        <dbReference type="ChEBI" id="CHEBI:29103"/>
    </ligand>
</feature>
<feature type="binding site" evidence="1">
    <location>
        <position position="172"/>
    </location>
    <ligand>
        <name>K(+)</name>
        <dbReference type="ChEBI" id="CHEBI:29103"/>
    </ligand>
</feature>
<feature type="binding site" evidence="1">
    <location>
        <position position="180"/>
    </location>
    <ligand>
        <name>K(+)</name>
        <dbReference type="ChEBI" id="CHEBI:29103"/>
    </ligand>
</feature>
<feature type="binding site" evidence="1">
    <location>
        <position position="182"/>
    </location>
    <ligand>
        <name>K(+)</name>
        <dbReference type="ChEBI" id="CHEBI:29103"/>
    </ligand>
</feature>
<feature type="binding site" evidence="1">
    <location>
        <position position="185"/>
    </location>
    <ligand>
        <name>K(+)</name>
        <dbReference type="ChEBI" id="CHEBI:29103"/>
    </ligand>
</feature>
<comment type="function">
    <text evidence="1">Has flap endonuclease activity. During DNA replication, flap endonucleases cleave the 5'-overhanging flap structure that is generated by displacement synthesis when DNA polymerase encounters the 5'-end of a downstream Okazaki fragment.</text>
</comment>
<comment type="cofactor">
    <cofactor evidence="1">
        <name>Mg(2+)</name>
        <dbReference type="ChEBI" id="CHEBI:18420"/>
    </cofactor>
    <text evidence="1">Binds 2 Mg(2+) per subunit. Only one magnesium ion has a direct interaction with the protein, the other interactions are indirect.</text>
</comment>
<comment type="cofactor">
    <cofactor evidence="1">
        <name>K(+)</name>
        <dbReference type="ChEBI" id="CHEBI:29103"/>
    </cofactor>
    <text evidence="1">Binds 1 K(+) per subunit. The potassium ion strongly increases the affinity for DNA.</text>
</comment>
<comment type="similarity">
    <text evidence="1">Belongs to the Xni family.</text>
</comment>
<comment type="sequence caution" evidence="2">
    <conflict type="erroneous initiation">
        <sequence resource="EMBL-CDS" id="CAU98971"/>
    </conflict>
    <text>Extended N-terminus.</text>
</comment>
<evidence type="ECO:0000255" key="1">
    <source>
        <dbReference type="HAMAP-Rule" id="MF_01192"/>
    </source>
</evidence>
<evidence type="ECO:0000305" key="2"/>
<sequence length="251" mass="28166">MAVHLLIVDALNLIRRIHAVQGSPCVETCQHALDQLIMHSQPTHAVAVFDDENRSSGWRHQRLPDYKAGRPPMPEELHDEMPALRAAFEQRGVPCWSTSGNEADDLAATLAVKVTQAGHQATIVSTDKGYCQLLSPTLRIRDYFQKRWLDAPFIDKEFGVQPQQLPDYWGLAGISSSKVPGVAGIGPKSATQLLVEFQSLEGIYENLDAVAEKWRKKLETHKEMAFLCRDIARLQTDLHIDGNLQQLRLVR</sequence>
<gene>
    <name evidence="1" type="primary">xni</name>
    <name evidence="1" type="synonym">ygdG</name>
    <name type="ordered locus">EC55989_3077</name>
</gene>
<proteinExistence type="inferred from homology"/>